<sequence>MADEYNAEEAAELKKKRTFRKFSYRGVDLDALLDLTSDELRDVVHARARRKINRGLKRRPMGLIKKLRKAKQEAKPNEKPDLVKTHLRDMIVVPEMIGSVVGIYSGKEFNQVEIKPEMVGHYLGEFSISYKPVKHGRPGIGATHSSRFIPLK</sequence>
<keyword id="KW-0687">Ribonucleoprotein</keyword>
<keyword id="KW-0689">Ribosomal protein</keyword>
<accession>P34737</accession>
<proteinExistence type="inferred from homology"/>
<reference key="1">
    <citation type="journal article" date="1994" name="J. Biol. Chem.">
        <title>The S12 ribosomal protein of Podospora anserina belongs to the S19 bacterial family and controls the mitochondrial genome integrity through cytoplasmic translation.</title>
        <authorList>
            <person name="Dequard-Chablat M."/>
            <person name="Sellem C.H."/>
        </authorList>
    </citation>
    <scope>NUCLEOTIDE SEQUENCE [GENOMIC DNA]</scope>
    <source>
        <strain>s</strain>
    </source>
</reference>
<organism>
    <name type="scientific">Podospora anserina</name>
    <name type="common">Pleurage anserina</name>
    <dbReference type="NCBI Taxonomy" id="2587412"/>
    <lineage>
        <taxon>Eukaryota</taxon>
        <taxon>Fungi</taxon>
        <taxon>Dikarya</taxon>
        <taxon>Ascomycota</taxon>
        <taxon>Pezizomycotina</taxon>
        <taxon>Sordariomycetes</taxon>
        <taxon>Sordariomycetidae</taxon>
        <taxon>Sordariales</taxon>
        <taxon>Podosporaceae</taxon>
        <taxon>Podospora</taxon>
    </lineage>
</organism>
<comment type="similarity">
    <text evidence="1">Belongs to the universal ribosomal protein uS19 family.</text>
</comment>
<gene>
    <name type="primary">RPS15</name>
    <name type="synonym">AS1</name>
</gene>
<dbReference type="EMBL" id="Z23267">
    <property type="protein sequence ID" value="CAA80805.1"/>
    <property type="molecule type" value="Genomic_DNA"/>
</dbReference>
<dbReference type="PIR" id="A53793">
    <property type="entry name" value="A53793"/>
</dbReference>
<dbReference type="SMR" id="P34737"/>
<dbReference type="VEuPathDB" id="FungiDB:PODANS_1_16650"/>
<dbReference type="GO" id="GO:0022627">
    <property type="term" value="C:cytosolic small ribosomal subunit"/>
    <property type="evidence" value="ECO:0007669"/>
    <property type="project" value="TreeGrafter"/>
</dbReference>
<dbReference type="GO" id="GO:0003723">
    <property type="term" value="F:RNA binding"/>
    <property type="evidence" value="ECO:0007669"/>
    <property type="project" value="InterPro"/>
</dbReference>
<dbReference type="GO" id="GO:0003735">
    <property type="term" value="F:structural constituent of ribosome"/>
    <property type="evidence" value="ECO:0007669"/>
    <property type="project" value="InterPro"/>
</dbReference>
<dbReference type="GO" id="GO:0000028">
    <property type="term" value="P:ribosomal small subunit assembly"/>
    <property type="evidence" value="ECO:0007669"/>
    <property type="project" value="TreeGrafter"/>
</dbReference>
<dbReference type="GO" id="GO:0006412">
    <property type="term" value="P:translation"/>
    <property type="evidence" value="ECO:0007669"/>
    <property type="project" value="InterPro"/>
</dbReference>
<dbReference type="FunFam" id="3.30.860.10:FF:000002">
    <property type="entry name" value="40S ribosomal protein S15"/>
    <property type="match status" value="1"/>
</dbReference>
<dbReference type="Gene3D" id="3.30.860.10">
    <property type="entry name" value="30s Ribosomal Protein S19, Chain A"/>
    <property type="match status" value="1"/>
</dbReference>
<dbReference type="HAMAP" id="MF_00531">
    <property type="entry name" value="Ribosomal_uS19"/>
    <property type="match status" value="1"/>
</dbReference>
<dbReference type="InterPro" id="IPR002222">
    <property type="entry name" value="Ribosomal_uS19"/>
</dbReference>
<dbReference type="InterPro" id="IPR020934">
    <property type="entry name" value="Ribosomal_uS19_CS"/>
</dbReference>
<dbReference type="InterPro" id="IPR005713">
    <property type="entry name" value="Ribosomal_uS19_euk/arc"/>
</dbReference>
<dbReference type="InterPro" id="IPR023575">
    <property type="entry name" value="Ribosomal_uS19_SF"/>
</dbReference>
<dbReference type="NCBIfam" id="NF003121">
    <property type="entry name" value="PRK04038.1"/>
    <property type="match status" value="1"/>
</dbReference>
<dbReference type="NCBIfam" id="TIGR01025">
    <property type="entry name" value="uS19_arch"/>
    <property type="match status" value="1"/>
</dbReference>
<dbReference type="PANTHER" id="PTHR11880">
    <property type="entry name" value="RIBOSOMAL PROTEIN S19P FAMILY MEMBER"/>
    <property type="match status" value="1"/>
</dbReference>
<dbReference type="PANTHER" id="PTHR11880:SF2">
    <property type="entry name" value="SMALL RIBOSOMAL SUBUNIT PROTEIN US19"/>
    <property type="match status" value="1"/>
</dbReference>
<dbReference type="Pfam" id="PF00203">
    <property type="entry name" value="Ribosomal_S19"/>
    <property type="match status" value="1"/>
</dbReference>
<dbReference type="PIRSF" id="PIRSF002144">
    <property type="entry name" value="Ribosomal_S19"/>
    <property type="match status" value="1"/>
</dbReference>
<dbReference type="PRINTS" id="PR00975">
    <property type="entry name" value="RIBOSOMALS19"/>
</dbReference>
<dbReference type="SUPFAM" id="SSF54570">
    <property type="entry name" value="Ribosomal protein S19"/>
    <property type="match status" value="1"/>
</dbReference>
<dbReference type="PROSITE" id="PS00323">
    <property type="entry name" value="RIBOSOMAL_S19"/>
    <property type="match status" value="1"/>
</dbReference>
<feature type="chain" id="PRO_0000130048" description="Small ribosomal subunit protein uS19">
    <location>
        <begin position="1"/>
        <end position="152"/>
    </location>
</feature>
<name>RS15_PODAS</name>
<evidence type="ECO:0000305" key="1"/>
<protein>
    <recommendedName>
        <fullName evidence="1">Small ribosomal subunit protein uS19</fullName>
    </recommendedName>
    <alternativeName>
        <fullName>40S ribosomal protein S15</fullName>
    </alternativeName>
    <alternativeName>
        <fullName>S12</fullName>
    </alternativeName>
</protein>